<keyword id="KW-0963">Cytoplasm</keyword>
<keyword id="KW-0489">Methyltransferase</keyword>
<keyword id="KW-0698">rRNA processing</keyword>
<keyword id="KW-0949">S-adenosyl-L-methionine</keyword>
<keyword id="KW-0808">Transferase</keyword>
<evidence type="ECO:0000255" key="1">
    <source>
        <dbReference type="HAMAP-Rule" id="MF_01862"/>
    </source>
</evidence>
<proteinExistence type="inferred from homology"/>
<gene>
    <name evidence="1" type="primary">rsmC</name>
    <name type="ordered locus">VC0395_A0151</name>
    <name type="ordered locus">VC395_0640</name>
</gene>
<feature type="chain" id="PRO_0000369792" description="Ribosomal RNA small subunit methyltransferase C">
    <location>
        <begin position="1"/>
        <end position="340"/>
    </location>
</feature>
<reference key="1">
    <citation type="submission" date="2007-03" db="EMBL/GenBank/DDBJ databases">
        <authorList>
            <person name="Heidelberg J."/>
        </authorList>
    </citation>
    <scope>NUCLEOTIDE SEQUENCE [LARGE SCALE GENOMIC DNA]</scope>
    <source>
        <strain>ATCC 39541 / Classical Ogawa 395 / O395</strain>
    </source>
</reference>
<reference key="2">
    <citation type="journal article" date="2008" name="PLoS ONE">
        <title>A recalibrated molecular clock and independent origins for the cholera pandemic clones.</title>
        <authorList>
            <person name="Feng L."/>
            <person name="Reeves P.R."/>
            <person name="Lan R."/>
            <person name="Ren Y."/>
            <person name="Gao C."/>
            <person name="Zhou Z."/>
            <person name="Ren Y."/>
            <person name="Cheng J."/>
            <person name="Wang W."/>
            <person name="Wang J."/>
            <person name="Qian W."/>
            <person name="Li D."/>
            <person name="Wang L."/>
        </authorList>
    </citation>
    <scope>NUCLEOTIDE SEQUENCE [LARGE SCALE GENOMIC DNA]</scope>
    <source>
        <strain>ATCC 39541 / Classical Ogawa 395 / O395</strain>
    </source>
</reference>
<protein>
    <recommendedName>
        <fullName evidence="1">Ribosomal RNA small subunit methyltransferase C</fullName>
        <ecNumber evidence="1">2.1.1.172</ecNumber>
    </recommendedName>
    <alternativeName>
        <fullName evidence="1">16S rRNA m2G1207 methyltransferase</fullName>
    </alternativeName>
    <alternativeName>
        <fullName evidence="1">rRNA (guanine-N(2)-)-methyltransferase RsmC</fullName>
    </alternativeName>
</protein>
<organism>
    <name type="scientific">Vibrio cholerae serotype O1 (strain ATCC 39541 / Classical Ogawa 395 / O395)</name>
    <dbReference type="NCBI Taxonomy" id="345073"/>
    <lineage>
        <taxon>Bacteria</taxon>
        <taxon>Pseudomonadati</taxon>
        <taxon>Pseudomonadota</taxon>
        <taxon>Gammaproteobacteria</taxon>
        <taxon>Vibrionales</taxon>
        <taxon>Vibrionaceae</taxon>
        <taxon>Vibrio</taxon>
    </lineage>
</organism>
<comment type="function">
    <text evidence="1">Specifically methylates the guanine in position 1207 of 16S rRNA in the 30S particle.</text>
</comment>
<comment type="catalytic activity">
    <reaction evidence="1">
        <text>guanosine(1207) in 16S rRNA + S-adenosyl-L-methionine = N(2)-methylguanosine(1207) in 16S rRNA + S-adenosyl-L-homocysteine + H(+)</text>
        <dbReference type="Rhea" id="RHEA:42736"/>
        <dbReference type="Rhea" id="RHEA-COMP:10213"/>
        <dbReference type="Rhea" id="RHEA-COMP:10214"/>
        <dbReference type="ChEBI" id="CHEBI:15378"/>
        <dbReference type="ChEBI" id="CHEBI:57856"/>
        <dbReference type="ChEBI" id="CHEBI:59789"/>
        <dbReference type="ChEBI" id="CHEBI:74269"/>
        <dbReference type="ChEBI" id="CHEBI:74481"/>
        <dbReference type="EC" id="2.1.1.172"/>
    </reaction>
</comment>
<comment type="subunit">
    <text evidence="1">Monomer.</text>
</comment>
<comment type="subcellular location">
    <subcellularLocation>
        <location evidence="1">Cytoplasm</location>
    </subcellularLocation>
</comment>
<comment type="similarity">
    <text evidence="1">Belongs to the methyltransferase superfamily. RsmC family.</text>
</comment>
<name>RSMC_VIBC3</name>
<accession>A5F942</accession>
<accession>C3LXE8</accession>
<sequence>MQPYTAPSEIALRQLDYFADKHVLVAGEVEDRFPIELRQYCASVSVFTTHYGYYSQLKAYPEITRYFGEQLTADLNADLILLYWPKAKQEAEYLLAMLLAKLGTGTEIVVVGENRSGVKSIEKMFAAYGPIHKYDSARRCSFYWGHCVHTPAAFDIEQWFKSYAVDYQGHELTIRSLPGVFSHGEFDLGSRLLLDTLPPLSGKVIDIGSGAGVLGCVMAKLNPHIELEMTDISALAIRSSQETLVANQLHGHVYPSDMFSDTGHHYNYIVTNPPFHSGLETSYSATERLLAESVDHLASGGSIWVVANSFLKYPPILEQAFGHCDIAAKTNKFAIYHAKK</sequence>
<dbReference type="EC" id="2.1.1.172" evidence="1"/>
<dbReference type="EMBL" id="CP000627">
    <property type="protein sequence ID" value="ABQ19860.1"/>
    <property type="molecule type" value="Genomic_DNA"/>
</dbReference>
<dbReference type="EMBL" id="CP001235">
    <property type="protein sequence ID" value="ACP08658.1"/>
    <property type="molecule type" value="Genomic_DNA"/>
</dbReference>
<dbReference type="RefSeq" id="WP_001183380.1">
    <property type="nucleotide sequence ID" value="NZ_JAACZH010000006.1"/>
</dbReference>
<dbReference type="SMR" id="A5F942"/>
<dbReference type="KEGG" id="vco:VC0395_A0151"/>
<dbReference type="KEGG" id="vcr:VC395_0640"/>
<dbReference type="PATRIC" id="fig|345073.21.peg.621"/>
<dbReference type="eggNOG" id="COG2813">
    <property type="taxonomic scope" value="Bacteria"/>
</dbReference>
<dbReference type="HOGENOM" id="CLU_049581_0_1_6"/>
<dbReference type="OrthoDB" id="9816072at2"/>
<dbReference type="Proteomes" id="UP000000249">
    <property type="component" value="Chromosome 2"/>
</dbReference>
<dbReference type="GO" id="GO:0005737">
    <property type="term" value="C:cytoplasm"/>
    <property type="evidence" value="ECO:0007669"/>
    <property type="project" value="UniProtKB-SubCell"/>
</dbReference>
<dbReference type="GO" id="GO:0052914">
    <property type="term" value="F:16S rRNA (guanine(1207)-N(2))-methyltransferase activity"/>
    <property type="evidence" value="ECO:0007669"/>
    <property type="project" value="UniProtKB-EC"/>
</dbReference>
<dbReference type="GO" id="GO:0003676">
    <property type="term" value="F:nucleic acid binding"/>
    <property type="evidence" value="ECO:0007669"/>
    <property type="project" value="InterPro"/>
</dbReference>
<dbReference type="CDD" id="cd02440">
    <property type="entry name" value="AdoMet_MTases"/>
    <property type="match status" value="1"/>
</dbReference>
<dbReference type="Gene3D" id="3.40.50.150">
    <property type="entry name" value="Vaccinia Virus protein VP39"/>
    <property type="match status" value="2"/>
</dbReference>
<dbReference type="HAMAP" id="MF_01862">
    <property type="entry name" value="16SrRNA_methyltr_C"/>
    <property type="match status" value="1"/>
</dbReference>
<dbReference type="InterPro" id="IPR002052">
    <property type="entry name" value="DNA_methylase_N6_adenine_CS"/>
</dbReference>
<dbReference type="InterPro" id="IPR013675">
    <property type="entry name" value="Mtase_sm_N"/>
</dbReference>
<dbReference type="InterPro" id="IPR023543">
    <property type="entry name" value="rRNA_ssu_MeTfrase_C"/>
</dbReference>
<dbReference type="InterPro" id="IPR046977">
    <property type="entry name" value="RsmC/RlmG"/>
</dbReference>
<dbReference type="InterPro" id="IPR029063">
    <property type="entry name" value="SAM-dependent_MTases_sf"/>
</dbReference>
<dbReference type="InterPro" id="IPR007848">
    <property type="entry name" value="Small_mtfrase_dom"/>
</dbReference>
<dbReference type="NCBIfam" id="NF007023">
    <property type="entry name" value="PRK09489.1"/>
    <property type="match status" value="1"/>
</dbReference>
<dbReference type="PANTHER" id="PTHR47816">
    <property type="entry name" value="RIBOSOMAL RNA SMALL SUBUNIT METHYLTRANSFERASE C"/>
    <property type="match status" value="1"/>
</dbReference>
<dbReference type="PANTHER" id="PTHR47816:SF4">
    <property type="entry name" value="RIBOSOMAL RNA SMALL SUBUNIT METHYLTRANSFERASE C"/>
    <property type="match status" value="1"/>
</dbReference>
<dbReference type="Pfam" id="PF05175">
    <property type="entry name" value="MTS"/>
    <property type="match status" value="1"/>
</dbReference>
<dbReference type="Pfam" id="PF08468">
    <property type="entry name" value="MTS_N"/>
    <property type="match status" value="1"/>
</dbReference>
<dbReference type="SUPFAM" id="SSF53335">
    <property type="entry name" value="S-adenosyl-L-methionine-dependent methyltransferases"/>
    <property type="match status" value="1"/>
</dbReference>